<keyword id="KW-0378">Hydrolase</keyword>
<keyword id="KW-0645">Protease</keyword>
<keyword id="KW-1185">Reference proteome</keyword>
<keyword id="KW-0346">Stress response</keyword>
<gene>
    <name type="primary">yraA</name>
    <name type="ordered locus">BSU27020</name>
</gene>
<sequence>MSKKIAVLVTDQFEDIEYTSPVKAYEEAGYSVVAIDLEAGKEVTGKHGEKVKIDKAISDVDASDFDALLIPGGFSPDLLRADDRPGEFAKAFVENKKPVFAICHGPQVLIDTDLLKGKDITGYRSIRKDLINAGANYKDAEVVVSHNIVTSRTPDDLEAFNRESLNLLK</sequence>
<proteinExistence type="evidence at transcript level"/>
<comment type="function">
    <text evidence="2">Functions in the protection against aldehyde-stress, possibly by degrading damaged proteins.</text>
</comment>
<comment type="induction">
    <text evidence="2">The adhR-yraA operon is induced by formaldehyde and methylgloxal, under the control of AdhR (PubMed:19170879). A second yraA-specific transcription unit is not induced by formaldehyde or methylglyoxal and is not controlled by AdhR (PubMed:19170879). Transcribed under partial control of SigM ECF sigma factor (PubMed:17434969).</text>
</comment>
<comment type="disruption phenotype">
    <text evidence="2">No aldehyde-stress related phenotype; when combined with a yfkM disruption shows significantly reduced growth in the presence of formaldehye and methylglyoxal.</text>
</comment>
<comment type="similarity">
    <text evidence="3">Belongs to the peptidase C56 family.</text>
</comment>
<comment type="sequence caution" evidence="3">
    <conflict type="frameshift">
        <sequence resource="EMBL-CDS" id="CAA63466"/>
    </conflict>
</comment>
<protein>
    <recommendedName>
        <fullName>Putative cysteine protease YraA</fullName>
        <ecNumber>3.2.-.-</ecNumber>
    </recommendedName>
</protein>
<organism>
    <name type="scientific">Bacillus subtilis (strain 168)</name>
    <dbReference type="NCBI Taxonomy" id="224308"/>
    <lineage>
        <taxon>Bacteria</taxon>
        <taxon>Bacillati</taxon>
        <taxon>Bacillota</taxon>
        <taxon>Bacilli</taxon>
        <taxon>Bacillales</taxon>
        <taxon>Bacillaceae</taxon>
        <taxon>Bacillus</taxon>
    </lineage>
</organism>
<accession>O06006</accession>
<evidence type="ECO:0000255" key="1">
    <source>
        <dbReference type="PROSITE-ProRule" id="PRU00608"/>
    </source>
</evidence>
<evidence type="ECO:0000269" key="2">
    <source>
    </source>
</evidence>
<evidence type="ECO:0000305" key="3"/>
<feature type="chain" id="PRO_0000157833" description="Putative cysteine protease YraA">
    <location>
        <begin position="1"/>
        <end position="169"/>
    </location>
</feature>
<feature type="domain" description="PfpI endopeptidase" evidence="1">
    <location>
        <begin position="3"/>
        <end position="169"/>
    </location>
</feature>
<feature type="active site" description="Nucleophile" evidence="1">
    <location>
        <position position="103"/>
    </location>
</feature>
<feature type="active site" evidence="1">
    <location>
        <position position="104"/>
    </location>
</feature>
<name>YRAA_BACSU</name>
<dbReference type="EC" id="3.2.-.-"/>
<dbReference type="EMBL" id="X92868">
    <property type="protein sequence ID" value="CAA63466.1"/>
    <property type="status" value="ALT_FRAME"/>
    <property type="molecule type" value="Genomic_DNA"/>
</dbReference>
<dbReference type="EMBL" id="AL009126">
    <property type="protein sequence ID" value="CAB14644.2"/>
    <property type="molecule type" value="Genomic_DNA"/>
</dbReference>
<dbReference type="PIR" id="A69970">
    <property type="entry name" value="A69970"/>
</dbReference>
<dbReference type="RefSeq" id="WP_003229836.1">
    <property type="nucleotide sequence ID" value="NZ_OZ025638.1"/>
</dbReference>
<dbReference type="SMR" id="O06006"/>
<dbReference type="FunCoup" id="O06006">
    <property type="interactions" value="454"/>
</dbReference>
<dbReference type="STRING" id="224308.BSU27020"/>
<dbReference type="MEROPS" id="C56.001"/>
<dbReference type="jPOST" id="O06006"/>
<dbReference type="PaxDb" id="224308-BSU27020"/>
<dbReference type="EnsemblBacteria" id="CAB14644">
    <property type="protein sequence ID" value="CAB14644"/>
    <property type="gene ID" value="BSU_27020"/>
</dbReference>
<dbReference type="GeneID" id="937603"/>
<dbReference type="KEGG" id="bsu:BSU27020"/>
<dbReference type="PATRIC" id="fig|224308.179.peg.2935"/>
<dbReference type="eggNOG" id="COG0693">
    <property type="taxonomic scope" value="Bacteria"/>
</dbReference>
<dbReference type="InParanoid" id="O06006"/>
<dbReference type="OrthoDB" id="9792284at2"/>
<dbReference type="PhylomeDB" id="O06006"/>
<dbReference type="BioCyc" id="BSUB:BSU27020-MONOMER"/>
<dbReference type="Proteomes" id="UP000001570">
    <property type="component" value="Chromosome"/>
</dbReference>
<dbReference type="GO" id="GO:0008233">
    <property type="term" value="F:peptidase activity"/>
    <property type="evidence" value="ECO:0007669"/>
    <property type="project" value="UniProtKB-KW"/>
</dbReference>
<dbReference type="GO" id="GO:0006508">
    <property type="term" value="P:proteolysis"/>
    <property type="evidence" value="ECO:0007669"/>
    <property type="project" value="UniProtKB-KW"/>
</dbReference>
<dbReference type="CDD" id="cd03134">
    <property type="entry name" value="GATase1_PfpI_like"/>
    <property type="match status" value="1"/>
</dbReference>
<dbReference type="Gene3D" id="3.40.50.880">
    <property type="match status" value="1"/>
</dbReference>
<dbReference type="InterPro" id="IPR006286">
    <property type="entry name" value="C56_PfpI-like"/>
</dbReference>
<dbReference type="InterPro" id="IPR029062">
    <property type="entry name" value="Class_I_gatase-like"/>
</dbReference>
<dbReference type="InterPro" id="IPR002818">
    <property type="entry name" value="DJ-1/PfpI"/>
</dbReference>
<dbReference type="NCBIfam" id="TIGR01382">
    <property type="entry name" value="PfpI"/>
    <property type="match status" value="1"/>
</dbReference>
<dbReference type="PANTHER" id="PTHR42733">
    <property type="entry name" value="DJ-1 PROTEIN"/>
    <property type="match status" value="1"/>
</dbReference>
<dbReference type="PANTHER" id="PTHR42733:SF2">
    <property type="entry name" value="DJ-1_THIJ_PFPI FAMILY PROTEIN"/>
    <property type="match status" value="1"/>
</dbReference>
<dbReference type="Pfam" id="PF01965">
    <property type="entry name" value="DJ-1_PfpI"/>
    <property type="match status" value="1"/>
</dbReference>
<dbReference type="SUPFAM" id="SSF52317">
    <property type="entry name" value="Class I glutamine amidotransferase-like"/>
    <property type="match status" value="1"/>
</dbReference>
<dbReference type="PROSITE" id="PS51276">
    <property type="entry name" value="PEPTIDASE_C56_PFPI"/>
    <property type="match status" value="1"/>
</dbReference>
<reference key="1">
    <citation type="journal article" date="1997" name="Microbiology">
        <title>A 23911 bp region of the Bacillus subtilis genome comprising genes located upstream and downstream of the lev operon.</title>
        <authorList>
            <person name="Parro V."/>
            <person name="San Roman M."/>
            <person name="Galindo I."/>
            <person name="Purnelle B."/>
            <person name="Bolotin A."/>
            <person name="Sorokin A."/>
            <person name="Mellado R.P."/>
        </authorList>
    </citation>
    <scope>NUCLEOTIDE SEQUENCE [GENOMIC DNA]</scope>
    <source>
        <strain>168</strain>
    </source>
</reference>
<reference key="2">
    <citation type="journal article" date="1997" name="Nature">
        <title>The complete genome sequence of the Gram-positive bacterium Bacillus subtilis.</title>
        <authorList>
            <person name="Kunst F."/>
            <person name="Ogasawara N."/>
            <person name="Moszer I."/>
            <person name="Albertini A.M."/>
            <person name="Alloni G."/>
            <person name="Azevedo V."/>
            <person name="Bertero M.G."/>
            <person name="Bessieres P."/>
            <person name="Bolotin A."/>
            <person name="Borchert S."/>
            <person name="Borriss R."/>
            <person name="Boursier L."/>
            <person name="Brans A."/>
            <person name="Braun M."/>
            <person name="Brignell S.C."/>
            <person name="Bron S."/>
            <person name="Brouillet S."/>
            <person name="Bruschi C.V."/>
            <person name="Caldwell B."/>
            <person name="Capuano V."/>
            <person name="Carter N.M."/>
            <person name="Choi S.-K."/>
            <person name="Codani J.-J."/>
            <person name="Connerton I.F."/>
            <person name="Cummings N.J."/>
            <person name="Daniel R.A."/>
            <person name="Denizot F."/>
            <person name="Devine K.M."/>
            <person name="Duesterhoeft A."/>
            <person name="Ehrlich S.D."/>
            <person name="Emmerson P.T."/>
            <person name="Entian K.-D."/>
            <person name="Errington J."/>
            <person name="Fabret C."/>
            <person name="Ferrari E."/>
            <person name="Foulger D."/>
            <person name="Fritz C."/>
            <person name="Fujita M."/>
            <person name="Fujita Y."/>
            <person name="Fuma S."/>
            <person name="Galizzi A."/>
            <person name="Galleron N."/>
            <person name="Ghim S.-Y."/>
            <person name="Glaser P."/>
            <person name="Goffeau A."/>
            <person name="Golightly E.J."/>
            <person name="Grandi G."/>
            <person name="Guiseppi G."/>
            <person name="Guy B.J."/>
            <person name="Haga K."/>
            <person name="Haiech J."/>
            <person name="Harwood C.R."/>
            <person name="Henaut A."/>
            <person name="Hilbert H."/>
            <person name="Holsappel S."/>
            <person name="Hosono S."/>
            <person name="Hullo M.-F."/>
            <person name="Itaya M."/>
            <person name="Jones L.-M."/>
            <person name="Joris B."/>
            <person name="Karamata D."/>
            <person name="Kasahara Y."/>
            <person name="Klaerr-Blanchard M."/>
            <person name="Klein C."/>
            <person name="Kobayashi Y."/>
            <person name="Koetter P."/>
            <person name="Koningstein G."/>
            <person name="Krogh S."/>
            <person name="Kumano M."/>
            <person name="Kurita K."/>
            <person name="Lapidus A."/>
            <person name="Lardinois S."/>
            <person name="Lauber J."/>
            <person name="Lazarevic V."/>
            <person name="Lee S.-M."/>
            <person name="Levine A."/>
            <person name="Liu H."/>
            <person name="Masuda S."/>
            <person name="Mauel C."/>
            <person name="Medigue C."/>
            <person name="Medina N."/>
            <person name="Mellado R.P."/>
            <person name="Mizuno M."/>
            <person name="Moestl D."/>
            <person name="Nakai S."/>
            <person name="Noback M."/>
            <person name="Noone D."/>
            <person name="O'Reilly M."/>
            <person name="Ogawa K."/>
            <person name="Ogiwara A."/>
            <person name="Oudega B."/>
            <person name="Park S.-H."/>
            <person name="Parro V."/>
            <person name="Pohl T.M."/>
            <person name="Portetelle D."/>
            <person name="Porwollik S."/>
            <person name="Prescott A.M."/>
            <person name="Presecan E."/>
            <person name="Pujic P."/>
            <person name="Purnelle B."/>
            <person name="Rapoport G."/>
            <person name="Rey M."/>
            <person name="Reynolds S."/>
            <person name="Rieger M."/>
            <person name="Rivolta C."/>
            <person name="Rocha E."/>
            <person name="Roche B."/>
            <person name="Rose M."/>
            <person name="Sadaie Y."/>
            <person name="Sato T."/>
            <person name="Scanlan E."/>
            <person name="Schleich S."/>
            <person name="Schroeter R."/>
            <person name="Scoffone F."/>
            <person name="Sekiguchi J."/>
            <person name="Sekowska A."/>
            <person name="Seror S.J."/>
            <person name="Serror P."/>
            <person name="Shin B.-S."/>
            <person name="Soldo B."/>
            <person name="Sorokin A."/>
            <person name="Tacconi E."/>
            <person name="Takagi T."/>
            <person name="Takahashi H."/>
            <person name="Takemaru K."/>
            <person name="Takeuchi M."/>
            <person name="Tamakoshi A."/>
            <person name="Tanaka T."/>
            <person name="Terpstra P."/>
            <person name="Tognoni A."/>
            <person name="Tosato V."/>
            <person name="Uchiyama S."/>
            <person name="Vandenbol M."/>
            <person name="Vannier F."/>
            <person name="Vassarotti A."/>
            <person name="Viari A."/>
            <person name="Wambutt R."/>
            <person name="Wedler E."/>
            <person name="Wedler H."/>
            <person name="Weitzenegger T."/>
            <person name="Winters P."/>
            <person name="Wipat A."/>
            <person name="Yamamoto H."/>
            <person name="Yamane K."/>
            <person name="Yasumoto K."/>
            <person name="Yata K."/>
            <person name="Yoshida K."/>
            <person name="Yoshikawa H.-F."/>
            <person name="Zumstein E."/>
            <person name="Yoshikawa H."/>
            <person name="Danchin A."/>
        </authorList>
    </citation>
    <scope>NUCLEOTIDE SEQUENCE [LARGE SCALE GENOMIC DNA]</scope>
    <source>
        <strain>168</strain>
    </source>
</reference>
<reference key="3">
    <citation type="journal article" date="1999" name="Genome Res.">
        <title>Detecting and analyzing DNA sequencing errors: toward a higher quality of the Bacillus subtilis genome sequence.</title>
        <authorList>
            <person name="Medigue C."/>
            <person name="Rose M."/>
            <person name="Viari A."/>
            <person name="Danchin A."/>
        </authorList>
    </citation>
    <scope>SEQUENCE REVISION TO C-TERMINUS</scope>
</reference>
<reference key="4">
    <citation type="journal article" date="2007" name="J. Bacteriol.">
        <title>SigM-responsive genes of Bacillus subtilis and their promoters.</title>
        <authorList>
            <person name="Jervis A.J."/>
            <person name="Thackray P.D."/>
            <person name="Houston C.W."/>
            <person name="Horsburgh M.J."/>
            <person name="Moir A."/>
        </authorList>
    </citation>
    <scope>INDUCTION</scope>
    <source>
        <strain>168 / 1604</strain>
    </source>
</reference>
<reference key="5">
    <citation type="journal article" date="2009" name="Mol. Microbiol.">
        <title>Genome-wide responses to carbonyl electrophiles in Bacillus subtilis: control of the thiol-dependent formaldehyde dehydrogenase AdhA and cysteine proteinase YraA by the MerR-family regulator YraB (AdhR).</title>
        <authorList>
            <person name="Nguyen T.T.H."/>
            <person name="Eiamphungporn W."/>
            <person name="Maeder U."/>
            <person name="Liebeke M."/>
            <person name="Lalk M."/>
            <person name="Hecker M."/>
            <person name="Helmann J.D."/>
            <person name="Antelmann H."/>
        </authorList>
    </citation>
    <scope>FUNCTION</scope>
    <scope>INDUCTION</scope>
    <scope>OPERON STRUCTURE</scope>
    <scope>DISRUPTION PHENOTYPE</scope>
    <source>
        <strain>168</strain>
    </source>
</reference>